<reference key="1">
    <citation type="journal article" date="2006" name="Mol. Biol. Evol.">
        <title>The complete chloroplast genome sequence of Pelargonium x hortorum: organization and evolution of the largest and most highly rearranged chloroplast genome of land plants.</title>
        <authorList>
            <person name="Chumley T.W."/>
            <person name="Palmer J.D."/>
            <person name="Mower J.P."/>
            <person name="Fourcade H.M."/>
            <person name="Calie P.J."/>
            <person name="Boore J.L."/>
            <person name="Jansen R.K."/>
        </authorList>
    </citation>
    <scope>NUCLEOTIDE SEQUENCE [LARGE SCALE GENOMIC DNA]</scope>
    <source>
        <strain>cv. Ringo White</strain>
    </source>
</reference>
<comment type="function">
    <text evidence="1">DNA-dependent RNA polymerase catalyzes the transcription of DNA into RNA using the four ribonucleoside triphosphates as substrates.</text>
</comment>
<comment type="catalytic activity">
    <reaction evidence="1">
        <text>RNA(n) + a ribonucleoside 5'-triphosphate = RNA(n+1) + diphosphate</text>
        <dbReference type="Rhea" id="RHEA:21248"/>
        <dbReference type="Rhea" id="RHEA-COMP:14527"/>
        <dbReference type="Rhea" id="RHEA-COMP:17342"/>
        <dbReference type="ChEBI" id="CHEBI:33019"/>
        <dbReference type="ChEBI" id="CHEBI:61557"/>
        <dbReference type="ChEBI" id="CHEBI:140395"/>
        <dbReference type="EC" id="2.7.7.6"/>
    </reaction>
</comment>
<comment type="cofactor">
    <cofactor evidence="1">
        <name>Mg(2+)</name>
        <dbReference type="ChEBI" id="CHEBI:18420"/>
    </cofactor>
    <text evidence="1">Binds 1 Mg(2+) ion per subunit.</text>
</comment>
<comment type="cofactor">
    <cofactor evidence="1">
        <name>Zn(2+)</name>
        <dbReference type="ChEBI" id="CHEBI:29105"/>
    </cofactor>
    <text evidence="1">Binds 1 Zn(2+) ion per subunit.</text>
</comment>
<comment type="subunit">
    <text evidence="1">In plastids the minimal PEP RNA polymerase catalytic core is composed of four subunits: alpha, beta, beta', and beta''. When a (nuclear-encoded) sigma factor is associated with the core the holoenzyme is formed, which can initiate transcription.</text>
</comment>
<comment type="subcellular location">
    <subcellularLocation>
        <location evidence="1">Plastid</location>
        <location evidence="1">Chloroplast</location>
    </subcellularLocation>
</comment>
<comment type="similarity">
    <text evidence="1">Belongs to the RNA polymerase beta' chain family. RpoC1 subfamily.</text>
</comment>
<feature type="chain" id="PRO_0000277174" description="DNA-directed RNA polymerase subunit beta'">
    <location>
        <begin position="1"/>
        <end position="701"/>
    </location>
</feature>
<feature type="binding site" evidence="1">
    <location>
        <position position="76"/>
    </location>
    <ligand>
        <name>Zn(2+)</name>
        <dbReference type="ChEBI" id="CHEBI:29105"/>
    </ligand>
</feature>
<feature type="binding site" evidence="1">
    <location>
        <position position="78"/>
    </location>
    <ligand>
        <name>Zn(2+)</name>
        <dbReference type="ChEBI" id="CHEBI:29105"/>
    </ligand>
</feature>
<feature type="binding site" evidence="1">
    <location>
        <position position="94"/>
    </location>
    <ligand>
        <name>Zn(2+)</name>
        <dbReference type="ChEBI" id="CHEBI:29105"/>
    </ligand>
</feature>
<feature type="binding site" evidence="1">
    <location>
        <position position="97"/>
    </location>
    <ligand>
        <name>Zn(2+)</name>
        <dbReference type="ChEBI" id="CHEBI:29105"/>
    </ligand>
</feature>
<feature type="binding site" evidence="1">
    <location>
        <position position="511"/>
    </location>
    <ligand>
        <name>Mg(2+)</name>
        <dbReference type="ChEBI" id="CHEBI:18420"/>
    </ligand>
</feature>
<feature type="binding site" evidence="1">
    <location>
        <position position="513"/>
    </location>
    <ligand>
        <name>Mg(2+)</name>
        <dbReference type="ChEBI" id="CHEBI:18420"/>
    </ligand>
</feature>
<feature type="binding site" evidence="1">
    <location>
        <position position="515"/>
    </location>
    <ligand>
        <name>Mg(2+)</name>
        <dbReference type="ChEBI" id="CHEBI:18420"/>
    </ligand>
</feature>
<sequence>MIDKYQEPKHHQLRIGLVSPQQIMAWANKTLPTGEIVGEVKNYRTFSYDRDSETYKPERDGLFCERIFGPIKSGVCACGESRKIGDEKEKRTFCEKCGVEFVDSRIRRYQMGYIKLASPMAHVWYLKRIPSYIANLLDEKIKDLENLVYRDFIFAGPLTKKPTLLRLRGSFPESKTKFSGSRDILSQFLKTKSFQKLRDREFSAGAGAIRKRLANLDLEVIIYSSLAEWKKRKEQKAEIEIKPTRTERTEEEDRKIEKIKRRMRVLVRRMELAKHFLETNVKPEWMILRLLPVLPPELRPIFKISEVQFISSDLNTLYKEVISNNKILSDSLLGCKFVPEQLLTGQEKIVQVAVDQLLDNRISGQPRRDRNKQLYKSFSDILAGKEGRFRQTLLGRRVDYSGRSVIVVGPSLALHQCGLPREIALELFQTFIIRSLIRQRLASSVKTAKKQIREQERIVWDILEEVVQEHPVLLNRAPTLHRLGIQAFQPILTKERAIYLHPLVCKGFNADFDGDQMAVHLPLSLEAQAEAYLLMFSTQNLLSPGNGDPICVPTQDMLTGLYTLTLGNRRGICATRYNLWNRRNSQNERIDDKHYGSTKGKELLFCNPDDAIGAYRQKRINLDSPFWLKVTWGQHRIVSKELPVEVHYESLGTHHEIYGHCKIVRSVKTERHFIYIRTTVGHLFLDREIEDALKDFRARVV</sequence>
<evidence type="ECO:0000255" key="1">
    <source>
        <dbReference type="HAMAP-Rule" id="MF_01323"/>
    </source>
</evidence>
<dbReference type="EC" id="2.7.7.6" evidence="1"/>
<dbReference type="EMBL" id="DQ897681">
    <property type="protein sequence ID" value="ABI17252.1"/>
    <property type="molecule type" value="Genomic_DNA"/>
</dbReference>
<dbReference type="RefSeq" id="YP_784061.1">
    <property type="nucleotide sequence ID" value="NC_008454.1"/>
</dbReference>
<dbReference type="SMR" id="Q06FX0"/>
<dbReference type="GeneID" id="4362771"/>
<dbReference type="GO" id="GO:0009507">
    <property type="term" value="C:chloroplast"/>
    <property type="evidence" value="ECO:0007669"/>
    <property type="project" value="UniProtKB-SubCell"/>
</dbReference>
<dbReference type="GO" id="GO:0000428">
    <property type="term" value="C:DNA-directed RNA polymerase complex"/>
    <property type="evidence" value="ECO:0007669"/>
    <property type="project" value="UniProtKB-KW"/>
</dbReference>
<dbReference type="GO" id="GO:0005739">
    <property type="term" value="C:mitochondrion"/>
    <property type="evidence" value="ECO:0007669"/>
    <property type="project" value="GOC"/>
</dbReference>
<dbReference type="GO" id="GO:0003677">
    <property type="term" value="F:DNA binding"/>
    <property type="evidence" value="ECO:0007669"/>
    <property type="project" value="UniProtKB-UniRule"/>
</dbReference>
<dbReference type="GO" id="GO:0003899">
    <property type="term" value="F:DNA-directed RNA polymerase activity"/>
    <property type="evidence" value="ECO:0007669"/>
    <property type="project" value="UniProtKB-UniRule"/>
</dbReference>
<dbReference type="GO" id="GO:0000287">
    <property type="term" value="F:magnesium ion binding"/>
    <property type="evidence" value="ECO:0007669"/>
    <property type="project" value="UniProtKB-UniRule"/>
</dbReference>
<dbReference type="GO" id="GO:0008270">
    <property type="term" value="F:zinc ion binding"/>
    <property type="evidence" value="ECO:0007669"/>
    <property type="project" value="UniProtKB-UniRule"/>
</dbReference>
<dbReference type="GO" id="GO:0006351">
    <property type="term" value="P:DNA-templated transcription"/>
    <property type="evidence" value="ECO:0007669"/>
    <property type="project" value="UniProtKB-UniRule"/>
</dbReference>
<dbReference type="Gene3D" id="1.10.40.90">
    <property type="match status" value="1"/>
</dbReference>
<dbReference type="Gene3D" id="2.40.40.20">
    <property type="match status" value="1"/>
</dbReference>
<dbReference type="Gene3D" id="4.10.860.120">
    <property type="entry name" value="RNA polymerase II, clamp domain"/>
    <property type="match status" value="1"/>
</dbReference>
<dbReference type="Gene3D" id="1.10.274.100">
    <property type="entry name" value="RNA polymerase Rpb1, domain 3"/>
    <property type="match status" value="1"/>
</dbReference>
<dbReference type="HAMAP" id="MF_01323">
    <property type="entry name" value="RNApol_bact_RpoC1"/>
    <property type="match status" value="1"/>
</dbReference>
<dbReference type="InterPro" id="IPR045867">
    <property type="entry name" value="DNA-dir_RpoC_beta_prime"/>
</dbReference>
<dbReference type="InterPro" id="IPR000722">
    <property type="entry name" value="RNA_pol_asu"/>
</dbReference>
<dbReference type="InterPro" id="IPR006592">
    <property type="entry name" value="RNA_pol_N"/>
</dbReference>
<dbReference type="InterPro" id="IPR007080">
    <property type="entry name" value="RNA_pol_Rpb1_1"/>
</dbReference>
<dbReference type="InterPro" id="IPR007066">
    <property type="entry name" value="RNA_pol_Rpb1_3"/>
</dbReference>
<dbReference type="InterPro" id="IPR042102">
    <property type="entry name" value="RNA_pol_Rpb1_3_sf"/>
</dbReference>
<dbReference type="InterPro" id="IPR044893">
    <property type="entry name" value="RNA_pol_Rpb1_clamp_domain"/>
</dbReference>
<dbReference type="InterPro" id="IPR034678">
    <property type="entry name" value="RNApol_RpoC1"/>
</dbReference>
<dbReference type="PANTHER" id="PTHR19376">
    <property type="entry name" value="DNA-DIRECTED RNA POLYMERASE"/>
    <property type="match status" value="1"/>
</dbReference>
<dbReference type="PANTHER" id="PTHR19376:SF54">
    <property type="entry name" value="DNA-DIRECTED RNA POLYMERASE SUBUNIT BETA"/>
    <property type="match status" value="1"/>
</dbReference>
<dbReference type="Pfam" id="PF04997">
    <property type="entry name" value="RNA_pol_Rpb1_1"/>
    <property type="match status" value="1"/>
</dbReference>
<dbReference type="Pfam" id="PF00623">
    <property type="entry name" value="RNA_pol_Rpb1_2"/>
    <property type="match status" value="1"/>
</dbReference>
<dbReference type="Pfam" id="PF04983">
    <property type="entry name" value="RNA_pol_Rpb1_3"/>
    <property type="match status" value="1"/>
</dbReference>
<dbReference type="SMART" id="SM00663">
    <property type="entry name" value="RPOLA_N"/>
    <property type="match status" value="1"/>
</dbReference>
<dbReference type="SUPFAM" id="SSF64484">
    <property type="entry name" value="beta and beta-prime subunits of DNA dependent RNA-polymerase"/>
    <property type="match status" value="1"/>
</dbReference>
<organism>
    <name type="scientific">Pelargonium hortorum</name>
    <name type="common">Common geranium</name>
    <name type="synonym">Pelargonium inquinans x Pelargonium zonale</name>
    <dbReference type="NCBI Taxonomy" id="4031"/>
    <lineage>
        <taxon>Eukaryota</taxon>
        <taxon>Viridiplantae</taxon>
        <taxon>Streptophyta</taxon>
        <taxon>Embryophyta</taxon>
        <taxon>Tracheophyta</taxon>
        <taxon>Spermatophyta</taxon>
        <taxon>Magnoliopsida</taxon>
        <taxon>eudicotyledons</taxon>
        <taxon>Gunneridae</taxon>
        <taxon>Pentapetalae</taxon>
        <taxon>rosids</taxon>
        <taxon>malvids</taxon>
        <taxon>Geraniales</taxon>
        <taxon>Geraniaceae</taxon>
        <taxon>Pelargonium</taxon>
    </lineage>
</organism>
<geneLocation type="chloroplast"/>
<keyword id="KW-0150">Chloroplast</keyword>
<keyword id="KW-0240">DNA-directed RNA polymerase</keyword>
<keyword id="KW-0460">Magnesium</keyword>
<keyword id="KW-0479">Metal-binding</keyword>
<keyword id="KW-0548">Nucleotidyltransferase</keyword>
<keyword id="KW-0934">Plastid</keyword>
<keyword id="KW-0804">Transcription</keyword>
<keyword id="KW-0808">Transferase</keyword>
<keyword id="KW-0862">Zinc</keyword>
<proteinExistence type="inferred from homology"/>
<gene>
    <name evidence="1" type="primary">rpoC1</name>
</gene>
<protein>
    <recommendedName>
        <fullName evidence="1">DNA-directed RNA polymerase subunit beta'</fullName>
        <ecNumber evidence="1">2.7.7.6</ecNumber>
    </recommendedName>
    <alternativeName>
        <fullName evidence="1">PEP</fullName>
    </alternativeName>
    <alternativeName>
        <fullName evidence="1">Plastid-encoded RNA polymerase subunit beta'</fullName>
        <shortName evidence="1">RNA polymerase subunit beta'</shortName>
    </alternativeName>
</protein>
<accession>Q06FX0</accession>
<name>RPOC1_PELHO</name>